<sequence>MEVAPSDVDLRTSRRFYERAQHSIPGGVNSPARAFDSVGGTPLFIERAEGAYLEDADANEYLDYVGSWGPMIFGHAHPDVVEAVKDQAEASTSFGAPTEIEIEVADLVCDLVPSVEKVRMVNSGTEATMSAARLARGYTGRDKIIKFEGNYHGHGDFFLISAGSGAMTLGKPDSPGVTDGNAKDTLLAQYNDLSHVQRLVEANQGEVACIIVEPIAGNMGCIPPEPGFLEGLRELCDAHDIVLVFDEVMTGFRVAPGGAQERYGVIPDLTCLGKIIGGGLPVGAYGGKQEIMDYVAPTGPVYQAGTLSGNPLAMRAGHAILSKIAEEKDRIYDQLEDYAEALQKGTEHNLDALGLDYTTHQVGAMGSLFFTDAEVVDQDTAQTADTEAYAAYFHAMLEEGIYLPPSQFEAVFYGTCHGEDELETTLETQRRALKRVHS</sequence>
<keyword id="KW-0963">Cytoplasm</keyword>
<keyword id="KW-0413">Isomerase</keyword>
<keyword id="KW-0627">Porphyrin biosynthesis</keyword>
<keyword id="KW-0663">Pyridoxal phosphate</keyword>
<keyword id="KW-1185">Reference proteome</keyword>
<proteinExistence type="inferred from homology"/>
<accession>Q2S1S3</accession>
<reference key="1">
    <citation type="journal article" date="2005" name="Proc. Natl. Acad. Sci. U.S.A.">
        <title>The genome of Salinibacter ruber: convergence and gene exchange among hyperhalophilic bacteria and archaea.</title>
        <authorList>
            <person name="Mongodin E.F."/>
            <person name="Nelson K.E."/>
            <person name="Daugherty S."/>
            <person name="DeBoy R.T."/>
            <person name="Wister J."/>
            <person name="Khouri H."/>
            <person name="Weidman J."/>
            <person name="Walsh D.A."/>
            <person name="Papke R.T."/>
            <person name="Sanchez Perez G."/>
            <person name="Sharma A.K."/>
            <person name="Nesbo C.L."/>
            <person name="MacLeod D."/>
            <person name="Bapteste E."/>
            <person name="Doolittle W.F."/>
            <person name="Charlebois R.L."/>
            <person name="Legault B."/>
            <person name="Rodriguez-Valera F."/>
        </authorList>
    </citation>
    <scope>NUCLEOTIDE SEQUENCE [LARGE SCALE GENOMIC DNA]</scope>
    <source>
        <strain>DSM 13855 / CECT 5946 / M31</strain>
    </source>
</reference>
<gene>
    <name evidence="1" type="primary">hemL</name>
    <name type="ordered locus">SRU_1740</name>
</gene>
<name>GSA_SALRD</name>
<dbReference type="EC" id="5.4.3.8" evidence="1"/>
<dbReference type="EMBL" id="CP000159">
    <property type="protein sequence ID" value="ABC43686.1"/>
    <property type="status" value="ALT_INIT"/>
    <property type="molecule type" value="Genomic_DNA"/>
</dbReference>
<dbReference type="RefSeq" id="WP_013062195.1">
    <property type="nucleotide sequence ID" value="NC_007677.1"/>
</dbReference>
<dbReference type="RefSeq" id="YP_445858.1">
    <property type="nucleotide sequence ID" value="NC_007677.1"/>
</dbReference>
<dbReference type="SMR" id="Q2S1S3"/>
<dbReference type="STRING" id="309807.SRU_1740"/>
<dbReference type="EnsemblBacteria" id="ABC43686">
    <property type="protein sequence ID" value="ABC43686"/>
    <property type="gene ID" value="SRU_1740"/>
</dbReference>
<dbReference type="GeneID" id="83728668"/>
<dbReference type="KEGG" id="sru:SRU_1740"/>
<dbReference type="PATRIC" id="fig|309807.25.peg.1804"/>
<dbReference type="eggNOG" id="COG0001">
    <property type="taxonomic scope" value="Bacteria"/>
</dbReference>
<dbReference type="HOGENOM" id="CLU_016922_1_5_10"/>
<dbReference type="OrthoDB" id="9762089at2"/>
<dbReference type="UniPathway" id="UPA00251">
    <property type="reaction ID" value="UER00317"/>
</dbReference>
<dbReference type="Proteomes" id="UP000008674">
    <property type="component" value="Chromosome"/>
</dbReference>
<dbReference type="GO" id="GO:0005737">
    <property type="term" value="C:cytoplasm"/>
    <property type="evidence" value="ECO:0007669"/>
    <property type="project" value="UniProtKB-SubCell"/>
</dbReference>
<dbReference type="GO" id="GO:0042286">
    <property type="term" value="F:glutamate-1-semialdehyde 2,1-aminomutase activity"/>
    <property type="evidence" value="ECO:0007669"/>
    <property type="project" value="UniProtKB-UniRule"/>
</dbReference>
<dbReference type="GO" id="GO:0030170">
    <property type="term" value="F:pyridoxal phosphate binding"/>
    <property type="evidence" value="ECO:0007669"/>
    <property type="project" value="InterPro"/>
</dbReference>
<dbReference type="GO" id="GO:0008483">
    <property type="term" value="F:transaminase activity"/>
    <property type="evidence" value="ECO:0007669"/>
    <property type="project" value="InterPro"/>
</dbReference>
<dbReference type="GO" id="GO:0006782">
    <property type="term" value="P:protoporphyrinogen IX biosynthetic process"/>
    <property type="evidence" value="ECO:0007669"/>
    <property type="project" value="UniProtKB-UniRule"/>
</dbReference>
<dbReference type="CDD" id="cd00610">
    <property type="entry name" value="OAT_like"/>
    <property type="match status" value="1"/>
</dbReference>
<dbReference type="FunFam" id="3.40.640.10:FF:000021">
    <property type="entry name" value="Glutamate-1-semialdehyde 2,1-aminomutase"/>
    <property type="match status" value="1"/>
</dbReference>
<dbReference type="Gene3D" id="3.90.1150.10">
    <property type="entry name" value="Aspartate Aminotransferase, domain 1"/>
    <property type="match status" value="1"/>
</dbReference>
<dbReference type="Gene3D" id="3.40.640.10">
    <property type="entry name" value="Type I PLP-dependent aspartate aminotransferase-like (Major domain)"/>
    <property type="match status" value="1"/>
</dbReference>
<dbReference type="HAMAP" id="MF_00375">
    <property type="entry name" value="HemL_aminotrans_3"/>
    <property type="match status" value="1"/>
</dbReference>
<dbReference type="InterPro" id="IPR004639">
    <property type="entry name" value="4pyrrol_synth_GluAld_NH2Trfase"/>
</dbReference>
<dbReference type="InterPro" id="IPR005814">
    <property type="entry name" value="Aminotrans_3"/>
</dbReference>
<dbReference type="InterPro" id="IPR049704">
    <property type="entry name" value="Aminotrans_3_PPA_site"/>
</dbReference>
<dbReference type="InterPro" id="IPR015424">
    <property type="entry name" value="PyrdxlP-dep_Trfase"/>
</dbReference>
<dbReference type="InterPro" id="IPR015421">
    <property type="entry name" value="PyrdxlP-dep_Trfase_major"/>
</dbReference>
<dbReference type="InterPro" id="IPR015422">
    <property type="entry name" value="PyrdxlP-dep_Trfase_small"/>
</dbReference>
<dbReference type="NCBIfam" id="TIGR00713">
    <property type="entry name" value="hemL"/>
    <property type="match status" value="1"/>
</dbReference>
<dbReference type="NCBIfam" id="NF000818">
    <property type="entry name" value="PRK00062.1"/>
    <property type="match status" value="1"/>
</dbReference>
<dbReference type="PANTHER" id="PTHR43713">
    <property type="entry name" value="GLUTAMATE-1-SEMIALDEHYDE 2,1-AMINOMUTASE"/>
    <property type="match status" value="1"/>
</dbReference>
<dbReference type="PANTHER" id="PTHR43713:SF3">
    <property type="entry name" value="GLUTAMATE-1-SEMIALDEHYDE 2,1-AMINOMUTASE 1, CHLOROPLASTIC-RELATED"/>
    <property type="match status" value="1"/>
</dbReference>
<dbReference type="Pfam" id="PF00202">
    <property type="entry name" value="Aminotran_3"/>
    <property type="match status" value="1"/>
</dbReference>
<dbReference type="SUPFAM" id="SSF53383">
    <property type="entry name" value="PLP-dependent transferases"/>
    <property type="match status" value="1"/>
</dbReference>
<dbReference type="PROSITE" id="PS00600">
    <property type="entry name" value="AA_TRANSFER_CLASS_3"/>
    <property type="match status" value="1"/>
</dbReference>
<evidence type="ECO:0000255" key="1">
    <source>
        <dbReference type="HAMAP-Rule" id="MF_00375"/>
    </source>
</evidence>
<evidence type="ECO:0000305" key="2"/>
<protein>
    <recommendedName>
        <fullName evidence="1">Glutamate-1-semialdehyde 2,1-aminomutase</fullName>
        <shortName evidence="1">GSA</shortName>
        <ecNumber evidence="1">5.4.3.8</ecNumber>
    </recommendedName>
    <alternativeName>
        <fullName evidence="1">Glutamate-1-semialdehyde aminotransferase</fullName>
        <shortName evidence="1">GSA-AT</shortName>
    </alternativeName>
</protein>
<comment type="catalytic activity">
    <reaction evidence="1">
        <text>(S)-4-amino-5-oxopentanoate = 5-aminolevulinate</text>
        <dbReference type="Rhea" id="RHEA:14265"/>
        <dbReference type="ChEBI" id="CHEBI:57501"/>
        <dbReference type="ChEBI" id="CHEBI:356416"/>
        <dbReference type="EC" id="5.4.3.8"/>
    </reaction>
</comment>
<comment type="cofactor">
    <cofactor evidence="1">
        <name>pyridoxal 5'-phosphate</name>
        <dbReference type="ChEBI" id="CHEBI:597326"/>
    </cofactor>
</comment>
<comment type="pathway">
    <text evidence="1">Porphyrin-containing compound metabolism; protoporphyrin-IX biosynthesis; 5-aminolevulinate from L-glutamyl-tRNA(Glu): step 2/2.</text>
</comment>
<comment type="subunit">
    <text evidence="1">Homodimer.</text>
</comment>
<comment type="subcellular location">
    <subcellularLocation>
        <location evidence="1">Cytoplasm</location>
    </subcellularLocation>
</comment>
<comment type="similarity">
    <text evidence="1">Belongs to the class-III pyridoxal-phosphate-dependent aminotransferase family. HemL subfamily.</text>
</comment>
<comment type="sequence caution" evidence="2">
    <conflict type="erroneous initiation">
        <sequence resource="EMBL-CDS" id="ABC43686"/>
    </conflict>
</comment>
<organism>
    <name type="scientific">Salinibacter ruber (strain DSM 13855 / M31)</name>
    <dbReference type="NCBI Taxonomy" id="309807"/>
    <lineage>
        <taxon>Bacteria</taxon>
        <taxon>Pseudomonadati</taxon>
        <taxon>Rhodothermota</taxon>
        <taxon>Rhodothermia</taxon>
        <taxon>Rhodothermales</taxon>
        <taxon>Salinibacteraceae</taxon>
        <taxon>Salinibacter</taxon>
    </lineage>
</organism>
<feature type="chain" id="PRO_0000243613" description="Glutamate-1-semialdehyde 2,1-aminomutase">
    <location>
        <begin position="1"/>
        <end position="438"/>
    </location>
</feature>
<feature type="modified residue" description="N6-(pyridoxal phosphate)lysine" evidence="1">
    <location>
        <position position="274"/>
    </location>
</feature>